<proteinExistence type="evidence at protein level"/>
<feature type="chain" id="PRO_0000234435" description="Solute carrier family 22 member 11">
    <location>
        <begin position="1"/>
        <end position="550"/>
    </location>
</feature>
<feature type="topological domain" description="Cytoplasmic" evidence="1">
    <location>
        <begin position="1"/>
        <end position="10"/>
    </location>
</feature>
<feature type="transmembrane region" description="Helical" evidence="1">
    <location>
        <begin position="11"/>
        <end position="31"/>
    </location>
</feature>
<feature type="topological domain" description="Extracellular" evidence="1">
    <location>
        <begin position="32"/>
        <end position="142"/>
    </location>
</feature>
<feature type="transmembrane region" description="Helical" evidence="1">
    <location>
        <begin position="143"/>
        <end position="163"/>
    </location>
</feature>
<feature type="topological domain" description="Cytoplasmic" evidence="1">
    <location>
        <begin position="164"/>
        <end position="174"/>
    </location>
</feature>
<feature type="transmembrane region" description="Helical" evidence="1">
    <location>
        <begin position="175"/>
        <end position="195"/>
    </location>
</feature>
<feature type="topological domain" description="Extracellular" evidence="1">
    <location>
        <begin position="196"/>
        <end position="200"/>
    </location>
</feature>
<feature type="transmembrane region" description="Helical" evidence="1">
    <location>
        <begin position="201"/>
        <end position="221"/>
    </location>
</feature>
<feature type="topological domain" description="Cytoplasmic" evidence="1">
    <location>
        <begin position="222"/>
        <end position="231"/>
    </location>
</feature>
<feature type="transmembrane region" description="Helical" evidence="1">
    <location>
        <begin position="232"/>
        <end position="252"/>
    </location>
</feature>
<feature type="topological domain" description="Extracellular" evidence="1">
    <location>
        <begin position="253"/>
        <end position="256"/>
    </location>
</feature>
<feature type="transmembrane region" description="Helical" evidence="1">
    <location>
        <begin position="257"/>
        <end position="277"/>
    </location>
</feature>
<feature type="topological domain" description="Cytoplasmic" evidence="1">
    <location>
        <begin position="278"/>
        <end position="346"/>
    </location>
</feature>
<feature type="transmembrane region" description="Helical" evidence="1">
    <location>
        <begin position="347"/>
        <end position="367"/>
    </location>
</feature>
<feature type="topological domain" description="Extracellular" evidence="1">
    <location>
        <begin position="368"/>
        <end position="378"/>
    </location>
</feature>
<feature type="transmembrane region" description="Helical" evidence="1">
    <location>
        <begin position="379"/>
        <end position="399"/>
    </location>
</feature>
<feature type="topological domain" description="Cytoplasmic" evidence="1">
    <location>
        <begin position="400"/>
        <end position="402"/>
    </location>
</feature>
<feature type="transmembrane region" description="Helical" evidence="1">
    <location>
        <begin position="403"/>
        <end position="423"/>
    </location>
</feature>
<feature type="topological domain" description="Extracellular" evidence="1">
    <location>
        <begin position="424"/>
        <end position="430"/>
    </location>
</feature>
<feature type="transmembrane region" description="Helical" evidence="1">
    <location>
        <begin position="431"/>
        <end position="451"/>
    </location>
</feature>
<feature type="topological domain" description="Cytoplasmic" evidence="1">
    <location>
        <begin position="452"/>
        <end position="463"/>
    </location>
</feature>
<feature type="transmembrane region" description="Helical" evidence="1">
    <location>
        <begin position="464"/>
        <end position="484"/>
    </location>
</feature>
<feature type="topological domain" description="Extracellular" evidence="1">
    <location>
        <begin position="485"/>
        <end position="490"/>
    </location>
</feature>
<feature type="transmembrane region" description="Helical" evidence="1">
    <location>
        <begin position="491"/>
        <end position="511"/>
    </location>
</feature>
<feature type="topological domain" description="Cytoplasmic" evidence="1">
    <location>
        <begin position="512"/>
        <end position="550"/>
    </location>
</feature>
<feature type="region of interest" description="Disordered" evidence="2">
    <location>
        <begin position="531"/>
        <end position="550"/>
    </location>
</feature>
<feature type="glycosylation site" description="N-linked (GlcNAc...) asparagine" evidence="1">
    <location>
        <position position="39"/>
    </location>
</feature>
<feature type="glycosylation site" description="N-linked (GlcNAc...) asparagine" evidence="1">
    <location>
        <position position="56"/>
    </location>
</feature>
<feature type="glycosylation site" description="N-linked (GlcNAc...) asparagine" evidence="1">
    <location>
        <position position="99"/>
    </location>
</feature>
<feature type="splice variant" id="VSP_018319" description="In isoform 2." evidence="15">
    <original>NFSLLISYYGLVFDLQSLGRDIFLLQALFGAVDFLGRATTALLLSFLGRRTIQAGSQAMAGLAILANMLVPQDLQTLRVVFAVLGKGCFGISLTCLTIYKAELFPTPVR</original>
    <variation>K</variation>
    <location>
        <begin position="353"/>
        <end position="461"/>
    </location>
</feature>
<feature type="sequence variant" id="VAR_053962" description="In dbSNP:rs12785832.">
    <original>V</original>
    <variation>G</variation>
    <location>
        <position position="155"/>
    </location>
</feature>
<feature type="mutagenesis site" description="No visible effect on N-glycosylation. Loss of N-glycosylation and of cell surface location; when associated with Q-56; Q-63 and Q-99." evidence="9">
    <original>N</original>
    <variation>Q</variation>
    <location>
        <position position="39"/>
    </location>
</feature>
<feature type="mutagenesis site" description="Reduced cell surface expression and estrone 3-sulfate transport. Reduced cell surface expression and estrone 3-sulfate transport; when associated with A-52; A-83; A-305 and A-469." evidence="8">
    <original>H</original>
    <variation>A</variation>
    <location>
        <position position="47"/>
    </location>
</feature>
<feature type="mutagenesis site" description="Slightly reduced estrone 3-sulfate transport. Reduced cell surface expression and estrone 3-sulfate transport; when associated with A-47; A-83; A-305 and A-469." evidence="8">
    <original>H</original>
    <variation>A</variation>
    <location>
        <position position="52"/>
    </location>
</feature>
<feature type="mutagenesis site" description="No visible effect on N-glycosylation. Loss of N-glycosylation and of cell surface expression; when associated with Q-39; Q-63 and Q-99." evidence="9">
    <original>N</original>
    <variation>Q</variation>
    <location>
        <position position="56"/>
    </location>
</feature>
<feature type="mutagenesis site" description="No visible effect on N-glycosylation. Loss of N-glycosylation and of cell surface expression; when associated with Q-39; Q-56 and Q-99." evidence="9">
    <original>N</original>
    <variation>Q</variation>
    <location>
        <position position="63"/>
    </location>
</feature>
<feature type="mutagenesis site" description="Reduced cell surface expression and estrone 3-sulfate transport; when associated with A-47; A-52; A-305 and A-469." evidence="8">
    <original>H</original>
    <variation>A</variation>
    <location>
        <position position="83"/>
    </location>
</feature>
<feature type="mutagenesis site" description="No visible effect on N-glycosylation. Loss of N-glycosylation and of cell surface expression; when associated with Q-39; Q-56 and Q-63." evidence="9">
    <original>N</original>
    <variation>Q</variation>
    <location>
        <position position="99"/>
    </location>
</feature>
<feature type="mutagenesis site" description="Strongly reduced cell surface expression and estrone 3-sulfate transport." evidence="7">
    <original>G</original>
    <variation>L</variation>
    <variation>S</variation>
    <variation>V</variation>
    <location>
        <position position="241"/>
    </location>
</feature>
<feature type="mutagenesis site" description="Reduced cell surface expression and estrone 3-sulfate transport; when associated with A-47; A-52; A-83 and A-469." evidence="8">
    <original>H</original>
    <variation>A</variation>
    <location>
        <position position="305"/>
    </location>
</feature>
<feature type="mutagenesis site" description="Strongly reduced cell surface expression and estrone 3-sulfate transport." evidence="7">
    <original>G</original>
    <variation>L</variation>
    <variation>S</variation>
    <variation>V</variation>
    <location>
        <position position="400"/>
    </location>
</feature>
<feature type="mutagenesis site" description="Slightly reduced estrone 3-sulfate transport. Reduced cell surface expression and estrone 3-sulfate transport; when associated with A-47; A-52; A-83 and A-305." evidence="8">
    <original>H</original>
    <variation>A</variation>
    <location>
        <position position="469"/>
    </location>
</feature>
<feature type="sequence conflict" description="In Ref. 3; BAD96589." evidence="19" ref="3">
    <original>L</original>
    <variation>S</variation>
    <location>
        <position position="180"/>
    </location>
</feature>
<feature type="sequence conflict" description="In Ref. 2; BAC85252." evidence="19" ref="2">
    <original>L</original>
    <variation>R</variation>
    <location>
        <position position="376"/>
    </location>
</feature>
<feature type="helix" evidence="23">
    <location>
        <begin position="2"/>
        <end position="9"/>
    </location>
</feature>
<feature type="helix" evidence="23">
    <location>
        <begin position="15"/>
        <end position="35"/>
    </location>
</feature>
<feature type="helix" evidence="23">
    <location>
        <begin position="38"/>
        <end position="41"/>
    </location>
</feature>
<feature type="strand" evidence="23">
    <location>
        <begin position="47"/>
        <end position="49"/>
    </location>
</feature>
<feature type="helix" evidence="23">
    <location>
        <begin position="52"/>
        <end position="55"/>
    </location>
</feature>
<feature type="helix" evidence="23">
    <location>
        <begin position="66"/>
        <end position="73"/>
    </location>
</feature>
<feature type="strand" evidence="23">
    <location>
        <begin position="78"/>
        <end position="82"/>
    </location>
</feature>
<feature type="strand" evidence="23">
    <location>
        <begin position="84"/>
        <end position="90"/>
    </location>
</feature>
<feature type="helix" evidence="23">
    <location>
        <begin position="93"/>
        <end position="95"/>
    </location>
</feature>
<feature type="helix" evidence="23">
    <location>
        <begin position="107"/>
        <end position="109"/>
    </location>
</feature>
<feature type="strand" evidence="23">
    <location>
        <begin position="110"/>
        <end position="112"/>
    </location>
</feature>
<feature type="strand" evidence="23">
    <location>
        <begin position="117"/>
        <end position="119"/>
    </location>
</feature>
<feature type="helix" evidence="23">
    <location>
        <begin position="128"/>
        <end position="132"/>
    </location>
</feature>
<feature type="helix" evidence="23">
    <location>
        <begin position="141"/>
        <end position="163"/>
    </location>
</feature>
<feature type="turn" evidence="23">
    <location>
        <begin position="164"/>
        <end position="166"/>
    </location>
</feature>
<feature type="helix" evidence="23">
    <location>
        <begin position="169"/>
        <end position="186"/>
    </location>
</feature>
<feature type="helix" evidence="23">
    <location>
        <begin position="187"/>
        <end position="189"/>
    </location>
</feature>
<feature type="helix" evidence="23">
    <location>
        <begin position="193"/>
        <end position="221"/>
    </location>
</feature>
<feature type="helix" evidence="23">
    <location>
        <begin position="224"/>
        <end position="252"/>
    </location>
</feature>
<feature type="helix" evidence="23">
    <location>
        <begin position="255"/>
        <end position="275"/>
    </location>
</feature>
<feature type="helix" evidence="23">
    <location>
        <begin position="280"/>
        <end position="285"/>
    </location>
</feature>
<feature type="helix" evidence="23">
    <location>
        <begin position="289"/>
        <end position="302"/>
    </location>
</feature>
<feature type="helix" evidence="23">
    <location>
        <begin position="315"/>
        <end position="319"/>
    </location>
</feature>
<feature type="helix" evidence="23">
    <location>
        <begin position="321"/>
        <end position="326"/>
    </location>
</feature>
<feature type="helix" evidence="23">
    <location>
        <begin position="335"/>
        <end position="338"/>
    </location>
</feature>
<feature type="helix" evidence="23">
    <location>
        <begin position="340"/>
        <end position="365"/>
    </location>
</feature>
<feature type="helix" evidence="23">
    <location>
        <begin position="367"/>
        <end position="370"/>
    </location>
</feature>
<feature type="helix" evidence="23">
    <location>
        <begin position="374"/>
        <end position="398"/>
    </location>
</feature>
<feature type="helix" evidence="23">
    <location>
        <begin position="401"/>
        <end position="421"/>
    </location>
</feature>
<feature type="helix" evidence="23">
    <location>
        <begin position="427"/>
        <end position="455"/>
    </location>
</feature>
<feature type="helix" evidence="23">
    <location>
        <begin position="458"/>
        <end position="483"/>
    </location>
</feature>
<feature type="helix" evidence="23">
    <location>
        <begin position="484"/>
        <end position="487"/>
    </location>
</feature>
<feature type="helix" evidence="23">
    <location>
        <begin position="492"/>
        <end position="511"/>
    </location>
</feature>
<protein>
    <recommendedName>
        <fullName evidence="14">Solute carrier family 22 member 11</fullName>
    </recommendedName>
    <alternativeName>
        <fullName evidence="17">Organic anion transporter 4</fullName>
        <shortName evidence="17">OAT4</shortName>
    </alternativeName>
    <alternativeName>
        <fullName evidence="16">Organic anion:dicarboxylate exchanger OAT4</fullName>
    </alternativeName>
</protein>
<sequence length="550" mass="59972">MAFSKLLEQAGGVGLFQTLQVLTFILPCLMIPSQMLLENFSAAIPGHRCWTHMLDNGSAVSTNMTPKALLTISIPPGPNQGPHQCRRFRQPQWQLLDPNATATSWSEADTEPCVDGWVYDRSVFTSTIVAKWDLVCSSQGLKPLSQSIFMSGILVGSFIWGLLSYRFGRKPMLSWCCLQLAVAGTSTIFAPTFVIYCGLRFVAAFGMAGIFLSSLTLMVEWTTTSRRAVTMTVVGCAFSAGQAALGGLAFALRDWRTLQLAASVPFFAISLISWWLPESARWLIIKGKPDQALQELRKVARINGHKEAKNLTIEVLMSSVKEEVASAKEPRSVLDLFCVPVLRWRSCAMLVVNFSLLISYYGLVFDLQSLGRDIFLLQALFGAVDFLGRATTALLLSFLGRRTIQAGSQAMAGLAILANMLVPQDLQTLRVVFAVLGKGCFGISLTCLTIYKAELFPTPVRMTADGILHTVGRLGAMMGPLILMSRQALPLLPPLLYGVISIASSLVVLFFLPETQGLPLPDTIQDLESQKSTAAQGNRQEAVTVESTSL</sequence>
<accession>Q9NSA0</accession>
<accession>A8K426</accession>
<accession>Q53GR2</accession>
<accession>Q6ZP72</accession>
<accession>Q8NBU4</accession>
<organism>
    <name type="scientific">Homo sapiens</name>
    <name type="common">Human</name>
    <dbReference type="NCBI Taxonomy" id="9606"/>
    <lineage>
        <taxon>Eukaryota</taxon>
        <taxon>Metazoa</taxon>
        <taxon>Chordata</taxon>
        <taxon>Craniata</taxon>
        <taxon>Vertebrata</taxon>
        <taxon>Euteleostomi</taxon>
        <taxon>Mammalia</taxon>
        <taxon>Eutheria</taxon>
        <taxon>Euarchontoglires</taxon>
        <taxon>Primates</taxon>
        <taxon>Haplorrhini</taxon>
        <taxon>Catarrhini</taxon>
        <taxon>Hominidae</taxon>
        <taxon>Homo</taxon>
    </lineage>
</organism>
<reference key="1">
    <citation type="journal article" date="2000" name="J. Biol. Chem.">
        <title>Molecular cloning and characterization of multispecific organic anion transporter 4 expressed in the placenta.</title>
        <authorList>
            <person name="Cha S.H."/>
            <person name="Sekine T."/>
            <person name="Kusuhara H."/>
            <person name="Yu E."/>
            <person name="Kim J.Y."/>
            <person name="Kim D.K."/>
            <person name="Sugiyama Y."/>
            <person name="Kanai Y."/>
            <person name="Endou H."/>
        </authorList>
    </citation>
    <scope>NUCLEOTIDE SEQUENCE [MRNA] (ISOFORM 1)</scope>
    <scope>FUNCTION</scope>
    <scope>BIOPHYSICOCHEMICAL PROPERTIES</scope>
    <scope>TISSUE SPECIFICITY</scope>
    <source>
        <tissue>Kidney</tissue>
    </source>
</reference>
<reference key="2">
    <citation type="journal article" date="2004" name="Nat. Genet.">
        <title>Complete sequencing and characterization of 21,243 full-length human cDNAs.</title>
        <authorList>
            <person name="Ota T."/>
            <person name="Suzuki Y."/>
            <person name="Nishikawa T."/>
            <person name="Otsuki T."/>
            <person name="Sugiyama T."/>
            <person name="Irie R."/>
            <person name="Wakamatsu A."/>
            <person name="Hayashi K."/>
            <person name="Sato H."/>
            <person name="Nagai K."/>
            <person name="Kimura K."/>
            <person name="Makita H."/>
            <person name="Sekine M."/>
            <person name="Obayashi M."/>
            <person name="Nishi T."/>
            <person name="Shibahara T."/>
            <person name="Tanaka T."/>
            <person name="Ishii S."/>
            <person name="Yamamoto J."/>
            <person name="Saito K."/>
            <person name="Kawai Y."/>
            <person name="Isono Y."/>
            <person name="Nakamura Y."/>
            <person name="Nagahari K."/>
            <person name="Murakami K."/>
            <person name="Yasuda T."/>
            <person name="Iwayanagi T."/>
            <person name="Wagatsuma M."/>
            <person name="Shiratori A."/>
            <person name="Sudo H."/>
            <person name="Hosoiri T."/>
            <person name="Kaku Y."/>
            <person name="Kodaira H."/>
            <person name="Kondo H."/>
            <person name="Sugawara M."/>
            <person name="Takahashi M."/>
            <person name="Kanda K."/>
            <person name="Yokoi T."/>
            <person name="Furuya T."/>
            <person name="Kikkawa E."/>
            <person name="Omura Y."/>
            <person name="Abe K."/>
            <person name="Kamihara K."/>
            <person name="Katsuta N."/>
            <person name="Sato K."/>
            <person name="Tanikawa M."/>
            <person name="Yamazaki M."/>
            <person name="Ninomiya K."/>
            <person name="Ishibashi T."/>
            <person name="Yamashita H."/>
            <person name="Murakawa K."/>
            <person name="Fujimori K."/>
            <person name="Tanai H."/>
            <person name="Kimata M."/>
            <person name="Watanabe M."/>
            <person name="Hiraoka S."/>
            <person name="Chiba Y."/>
            <person name="Ishida S."/>
            <person name="Ono Y."/>
            <person name="Takiguchi S."/>
            <person name="Watanabe S."/>
            <person name="Yosida M."/>
            <person name="Hotuta T."/>
            <person name="Kusano J."/>
            <person name="Kanehori K."/>
            <person name="Takahashi-Fujii A."/>
            <person name="Hara H."/>
            <person name="Tanase T.-O."/>
            <person name="Nomura Y."/>
            <person name="Togiya S."/>
            <person name="Komai F."/>
            <person name="Hara R."/>
            <person name="Takeuchi K."/>
            <person name="Arita M."/>
            <person name="Imose N."/>
            <person name="Musashino K."/>
            <person name="Yuuki H."/>
            <person name="Oshima A."/>
            <person name="Sasaki N."/>
            <person name="Aotsuka S."/>
            <person name="Yoshikawa Y."/>
            <person name="Matsunawa H."/>
            <person name="Ichihara T."/>
            <person name="Shiohata N."/>
            <person name="Sano S."/>
            <person name="Moriya S."/>
            <person name="Momiyama H."/>
            <person name="Satoh N."/>
            <person name="Takami S."/>
            <person name="Terashima Y."/>
            <person name="Suzuki O."/>
            <person name="Nakagawa S."/>
            <person name="Senoh A."/>
            <person name="Mizoguchi H."/>
            <person name="Goto Y."/>
            <person name="Shimizu F."/>
            <person name="Wakebe H."/>
            <person name="Hishigaki H."/>
            <person name="Watanabe T."/>
            <person name="Sugiyama A."/>
            <person name="Takemoto M."/>
            <person name="Kawakami B."/>
            <person name="Yamazaki M."/>
            <person name="Watanabe K."/>
            <person name="Kumagai A."/>
            <person name="Itakura S."/>
            <person name="Fukuzumi Y."/>
            <person name="Fujimori Y."/>
            <person name="Komiyama M."/>
            <person name="Tashiro H."/>
            <person name="Tanigami A."/>
            <person name="Fujiwara T."/>
            <person name="Ono T."/>
            <person name="Yamada K."/>
            <person name="Fujii Y."/>
            <person name="Ozaki K."/>
            <person name="Hirao M."/>
            <person name="Ohmori Y."/>
            <person name="Kawabata A."/>
            <person name="Hikiji T."/>
            <person name="Kobatake N."/>
            <person name="Inagaki H."/>
            <person name="Ikema Y."/>
            <person name="Okamoto S."/>
            <person name="Okitani R."/>
            <person name="Kawakami T."/>
            <person name="Noguchi S."/>
            <person name="Itoh T."/>
            <person name="Shigeta K."/>
            <person name="Senba T."/>
            <person name="Matsumura K."/>
            <person name="Nakajima Y."/>
            <person name="Mizuno T."/>
            <person name="Morinaga M."/>
            <person name="Sasaki M."/>
            <person name="Togashi T."/>
            <person name="Oyama M."/>
            <person name="Hata H."/>
            <person name="Watanabe M."/>
            <person name="Komatsu T."/>
            <person name="Mizushima-Sugano J."/>
            <person name="Satoh T."/>
            <person name="Shirai Y."/>
            <person name="Takahashi Y."/>
            <person name="Nakagawa K."/>
            <person name="Okumura K."/>
            <person name="Nagase T."/>
            <person name="Nomura N."/>
            <person name="Kikuchi H."/>
            <person name="Masuho Y."/>
            <person name="Yamashita R."/>
            <person name="Nakai K."/>
            <person name="Yada T."/>
            <person name="Nakamura Y."/>
            <person name="Ohara O."/>
            <person name="Isogai T."/>
            <person name="Sugano S."/>
        </authorList>
    </citation>
    <scope>NUCLEOTIDE SEQUENCE [LARGE SCALE MRNA] (ISOFORMS 1 AND 2)</scope>
    <source>
        <tissue>Kidney</tissue>
        <tissue>Placenta</tissue>
    </source>
</reference>
<reference key="3">
    <citation type="submission" date="2005-04" db="EMBL/GenBank/DDBJ databases">
        <authorList>
            <person name="Suzuki Y."/>
            <person name="Sugano S."/>
            <person name="Totoki Y."/>
            <person name="Toyoda A."/>
            <person name="Takeda T."/>
            <person name="Sakaki Y."/>
            <person name="Tanaka A."/>
            <person name="Yokoyama S."/>
        </authorList>
    </citation>
    <scope>NUCLEOTIDE SEQUENCE [LARGE SCALE MRNA] (ISOFORM 1)</scope>
    <source>
        <tissue>Liver</tissue>
    </source>
</reference>
<reference key="4">
    <citation type="journal article" date="2006" name="Nature">
        <title>Human chromosome 11 DNA sequence and analysis including novel gene identification.</title>
        <authorList>
            <person name="Taylor T.D."/>
            <person name="Noguchi H."/>
            <person name="Totoki Y."/>
            <person name="Toyoda A."/>
            <person name="Kuroki Y."/>
            <person name="Dewar K."/>
            <person name="Lloyd C."/>
            <person name="Itoh T."/>
            <person name="Takeda T."/>
            <person name="Kim D.-W."/>
            <person name="She X."/>
            <person name="Barlow K.F."/>
            <person name="Bloom T."/>
            <person name="Bruford E."/>
            <person name="Chang J.L."/>
            <person name="Cuomo C.A."/>
            <person name="Eichler E."/>
            <person name="FitzGerald M.G."/>
            <person name="Jaffe D.B."/>
            <person name="LaButti K."/>
            <person name="Nicol R."/>
            <person name="Park H.-S."/>
            <person name="Seaman C."/>
            <person name="Sougnez C."/>
            <person name="Yang X."/>
            <person name="Zimmer A.R."/>
            <person name="Zody M.C."/>
            <person name="Birren B.W."/>
            <person name="Nusbaum C."/>
            <person name="Fujiyama A."/>
            <person name="Hattori M."/>
            <person name="Rogers J."/>
            <person name="Lander E.S."/>
            <person name="Sakaki Y."/>
        </authorList>
    </citation>
    <scope>NUCLEOTIDE SEQUENCE [LARGE SCALE GENOMIC DNA]</scope>
</reference>
<reference key="5">
    <citation type="submission" date="2005-07" db="EMBL/GenBank/DDBJ databases">
        <authorList>
            <person name="Mural R.J."/>
            <person name="Istrail S."/>
            <person name="Sutton G.G."/>
            <person name="Florea L."/>
            <person name="Halpern A.L."/>
            <person name="Mobarry C.M."/>
            <person name="Lippert R."/>
            <person name="Walenz B."/>
            <person name="Shatkay H."/>
            <person name="Dew I."/>
            <person name="Miller J.R."/>
            <person name="Flanigan M.J."/>
            <person name="Edwards N.J."/>
            <person name="Bolanos R."/>
            <person name="Fasulo D."/>
            <person name="Halldorsson B.V."/>
            <person name="Hannenhalli S."/>
            <person name="Turner R."/>
            <person name="Yooseph S."/>
            <person name="Lu F."/>
            <person name="Nusskern D.R."/>
            <person name="Shue B.C."/>
            <person name="Zheng X.H."/>
            <person name="Zhong F."/>
            <person name="Delcher A.L."/>
            <person name="Huson D.H."/>
            <person name="Kravitz S.A."/>
            <person name="Mouchard L."/>
            <person name="Reinert K."/>
            <person name="Remington K.A."/>
            <person name="Clark A.G."/>
            <person name="Waterman M.S."/>
            <person name="Eichler E.E."/>
            <person name="Adams M.D."/>
            <person name="Hunkapiller M.W."/>
            <person name="Myers E.W."/>
            <person name="Venter J.C."/>
        </authorList>
    </citation>
    <scope>NUCLEOTIDE SEQUENCE [LARGE SCALE GENOMIC DNA]</scope>
</reference>
<reference key="6">
    <citation type="journal article" date="2004" name="Genome Res.">
        <title>The status, quality, and expansion of the NIH full-length cDNA project: the Mammalian Gene Collection (MGC).</title>
        <authorList>
            <consortium name="The MGC Project Team"/>
        </authorList>
    </citation>
    <scope>NUCLEOTIDE SEQUENCE [LARGE SCALE MRNA] (ISOFORM 1)</scope>
    <source>
        <tissue>Colon</tissue>
    </source>
</reference>
<reference key="7">
    <citation type="journal article" date="2002" name="J. Pharmacol. Exp. Ther.">
        <title>Human organic anion transporters and human organic cation transporters mediate renal transport of prostaglandins.</title>
        <authorList>
            <person name="Kimura H."/>
            <person name="Takeda M."/>
            <person name="Narikawa S."/>
            <person name="Enomoto A."/>
            <person name="Ichida K."/>
            <person name="Endou H."/>
        </authorList>
    </citation>
    <scope>FUNCTION</scope>
    <scope>BIOPHYSICOCHEMICAL PROPERTIES</scope>
</reference>
<reference key="8">
    <citation type="journal article" date="2003" name="Am. J. Physiol.">
        <title>Characterization and identification of steroid sulfate transporters of human placenta.</title>
        <authorList>
            <person name="Ugele B."/>
            <person name="St-Pierre M.V."/>
            <person name="Pihusch M."/>
            <person name="Bahn A."/>
            <person name="Hantschmann P."/>
        </authorList>
    </citation>
    <scope>FUNCTION</scope>
    <scope>SUBCELLULAR LOCATION</scope>
    <scope>TISSUE SPECIFICITY</scope>
</reference>
<reference key="9">
    <citation type="journal article" date="2004" name="Biochem. J.">
        <title>Mutational analysis of histidine residues in human organic anion transporter 4 (hOAT4).</title>
        <authorList>
            <person name="Zhou F."/>
            <person name="Pan Z."/>
            <person name="Ma J."/>
            <person name="You G."/>
        </authorList>
    </citation>
    <scope>FUNCTION</scope>
    <scope>SUBCELLULAR LOCATION</scope>
    <scope>MUTAGENESIS OF HIS-47; HIS-52; HIS-83; HIS-305 AND HIS-469</scope>
</reference>
<reference key="10">
    <citation type="journal article" date="2004" name="J. Pharmacol. Sci.">
        <title>Human organic anion transporter 4 is a renal apical organic anion/dicarboxylate exchanger in the proximal tubules.</title>
        <authorList>
            <person name="Ekaratanawong S."/>
            <person name="Anzai N."/>
            <person name="Jutabha P."/>
            <person name="Miyazaki H."/>
            <person name="Noshiro R."/>
            <person name="Takeda M."/>
            <person name="Kanai Y."/>
            <person name="Sophasan S."/>
            <person name="Endou H."/>
        </authorList>
    </citation>
    <scope>FUNCTION</scope>
    <scope>TRANSPORTER ACTIVITY</scope>
    <scope>SUBCELLULAR LOCATION</scope>
    <scope>TISSUE SPECIFICITY</scope>
</reference>
<reference key="11">
    <citation type="journal article" date="2004" name="Mol. Pharmacol.">
        <title>The role of glycine residues in the function of human organic anion transporter 4.</title>
        <authorList>
            <person name="Zhou F."/>
            <person name="Tanaka K."/>
            <person name="Pan Z."/>
            <person name="Ma J."/>
            <person name="You G."/>
        </authorList>
    </citation>
    <scope>FUNCTION</scope>
    <scope>MUTAGENESIS OF GLY-241 AND GLY-400</scope>
</reference>
<reference key="12">
    <citation type="journal article" date="2005" name="Mol. Pharmacol.">
        <title>The role of N-linked glycosylation in protein folding, membrane targeting, and substrate binding of human organic anion transporter hOAT4.</title>
        <authorList>
            <person name="Zhou F."/>
            <person name="Xu W."/>
            <person name="Hong M."/>
            <person name="Pan Z."/>
            <person name="Sinko P.J."/>
            <person name="Ma J."/>
            <person name="You G."/>
        </authorList>
    </citation>
    <scope>FUNCTION</scope>
    <scope>SUBCELLULAR LOCATION</scope>
    <scope>GLYCOSYLATION</scope>
    <scope>MUTAGENESIS OF ASN-39; ASN-56; ASN-63 AND ASN-99</scope>
</reference>
<reference key="13">
    <citation type="journal article" date="2007" name="J. Am. Soc. Nephrol.">
        <title>Human renal organic anion transporter 4 operates as an asymmetric urate transporter.</title>
        <authorList>
            <person name="Hagos Y."/>
            <person name="Stein D."/>
            <person name="Ugele B."/>
            <person name="Burckhardt G."/>
            <person name="Bahn A."/>
        </authorList>
    </citation>
    <scope>FUNCTION</scope>
    <scope>TRANSPORTER ACTIVITY</scope>
</reference>
<reference key="14">
    <citation type="journal article" date="2008" name="J. Steroid Biochem. Mol. Biol.">
        <title>Functional differences in steroid sulfate uptake of organic anion transporter 4 (OAT4) and organic anion transporting polypeptide 2B1 (OATP2B1) in human placenta.</title>
        <authorList>
            <person name="Ugele B."/>
            <person name="Bahn A."/>
            <person name="Rex-Haffner M."/>
        </authorList>
    </citation>
    <scope>FUNCTION</scope>
    <scope>BIOPHYSICOCHEMICAL PROPERTIES</scope>
</reference>
<reference key="15">
    <citation type="journal article" date="2015" name="J. Physiol. (Lond.)">
        <title>Glutamate cycling may drive organic anion transport on the basal membrane of human placental syncytiotrophoblast.</title>
        <authorList>
            <person name="Lofthouse E.M."/>
            <person name="Brooks S."/>
            <person name="Cleal J.K."/>
            <person name="Hanson M.A."/>
            <person name="Poore K.R."/>
            <person name="O'Kelly I.M."/>
            <person name="Lewis R.M."/>
        </authorList>
    </citation>
    <scope>FUNCTION</scope>
    <scope>TISSUE SPECIFICITY</scope>
</reference>
<reference key="16">
    <citation type="journal article" date="2017" name="Biochem. Pharmacol.">
        <title>A novel mode of operation of SLC22A11: Membrane insertion of estrone sulfate versus translocation of uric acid and glutamate.</title>
        <authorList>
            <person name="Skwara P."/>
            <person name="Schoemig E."/>
            <person name="Gruendemann D."/>
        </authorList>
    </citation>
    <scope>FUNCTION</scope>
</reference>
<gene>
    <name evidence="22" type="primary">SLC22A11</name>
    <name type="synonym">OAT4</name>
</gene>
<comment type="function">
    <text evidence="3 4 5 6 7 8 9 10 11 12 13 18">Antiporter that mediates the transport of conjugated steroids and other specific organic anions at the basal membrane of syncytiotrophoblast and at the apical membrane of proximal tubule epithelial cells, in exchange for anionic compounds (PubMed:10660625, PubMed:11907186, PubMed:15037815, PubMed:15102942, PubMed:15291761, PubMed:15576633, PubMed:17229912, PubMed:18501590, PubMed:26277985, PubMed:28027879). May be responsible for placental absorption of fetal-derived steroid sulfates such as estrone sulfate (E1S) and the steroid hormone precursor dehydroepiandrosterone sulfate (DHEA-S), as well as clearing waste products and xenobiotics from the fetus (PubMed:12409283). Maybe also be involved in placental urate homeostasis (PubMed:17229912). Facilitates the renal reabsorption of organic anions such as urate and derived steroid sulfates (PubMed:15037815, PubMed:17229912). Organic anion glutarate acts as conteranion for E1S renal uptake (PubMed:15037815, PubMed:17229912). Possible transport mode may also include DHEA-S/E1S exchange (PubMed:28027879). Also interacts with inorganic anions such as chloride and hydroxyl ions, therefore possible transport modes may include E1S/Cl(-), E1S/OH(-), urate/Cl(-) and urate/OH(-) (PubMed:17229912). Also mediates the transport of prostaglandin E2 (PGE2) and prostaglandin F2-alpha (PGF2-alpha) and may be involved in their renal excretion (PubMed:11907186). Also able to uptake anionic drugs, diuretics, bile salts and ochratoxin A (PubMed:10660625, PubMed:26277985). Mediates the unidirectional efflux of glutamate and aspartate (PubMed:28027879). Glutamate efflux down its transmembrane gradient may drive SLC22A11/OAT4-mediated placental uptake of E1S (PubMed:26277985).</text>
</comment>
<comment type="catalytic activity">
    <reaction evidence="6 10">
        <text>estrone 3-sulfate(out) + glutarate(in) = estrone 3-sulfate(in) + glutarate(out)</text>
        <dbReference type="Rhea" id="RHEA:72151"/>
        <dbReference type="ChEBI" id="CHEBI:30921"/>
        <dbReference type="ChEBI" id="CHEBI:60050"/>
    </reaction>
</comment>
<comment type="catalytic activity">
    <reaction evidence="21">
        <text>dehydroepiandrosterone 3-sulfate(out) = dehydroepiandrosterone 3-sulfate(in)</text>
        <dbReference type="Rhea" id="RHEA:71839"/>
        <dbReference type="ChEBI" id="CHEBI:57905"/>
    </reaction>
</comment>
<comment type="catalytic activity">
    <reaction evidence="20">
        <text>prostaglandin F2alpha(out) = prostaglandin F2alpha(in)</text>
        <dbReference type="Rhea" id="RHEA:50988"/>
        <dbReference type="ChEBI" id="CHEBI:57404"/>
    </reaction>
</comment>
<comment type="catalytic activity">
    <reaction evidence="20">
        <text>prostaglandin E2(out) = prostaglandin E2(in)</text>
        <dbReference type="Rhea" id="RHEA:50984"/>
        <dbReference type="ChEBI" id="CHEBI:606564"/>
    </reaction>
</comment>
<comment type="biophysicochemical properties">
    <kinetics>
        <KM evidence="3">1.01 uM for estrone 3-sulfate</KM>
        <KM evidence="3">0.63 uM for dehydroepiandrosterone sulfate</KM>
        <KM evidence="11">27 uM for estrone 3-sulfate</KM>
        <KM evidence="11">29.2 uM for dehydroepiandrosterone sulfate</KM>
        <KM evidence="4">154 nM for prostaglandin E2</KM>
        <KM evidence="4">692 nM for prostaglandin F2-alpha</KM>
        <Vmax evidence="11">581.0 pmol/min/mg enzyme with estrone 3-sulfate as substrate</Vmax>
        <Vmax evidence="11">620.0 pmol/min/mg enzyme with dehydroepiandrosterone sulfate as substrate</Vmax>
    </kinetics>
</comment>
<comment type="subcellular location">
    <subcellularLocation>
        <location evidence="8 9">Cell membrane</location>
        <topology evidence="8 9">Multi-pass membrane protein</topology>
    </subcellularLocation>
    <subcellularLocation>
        <location evidence="6">Apical cell membrane</location>
        <topology evidence="8 9">Multi-pass membrane protein</topology>
    </subcellularLocation>
    <subcellularLocation>
        <location evidence="5">Basal cell membrane</location>
        <topology evidence="8 9">Multi-pass membrane protein</topology>
    </subcellularLocation>
    <text evidence="5 6">Expressed at the apical membrane of the proximal tubule epithelial cells (PubMed:15037815). Expressed at the basal membrane of the syncytiotrophoblast (PubMed:12409283).</text>
</comment>
<comment type="alternative products">
    <event type="alternative splicing"/>
    <isoform>
        <id>Q9NSA0-1</id>
        <name>1</name>
        <sequence type="displayed"/>
    </isoform>
    <isoform>
        <id>Q9NSA0-2</id>
        <name>2</name>
        <sequence type="described" ref="VSP_018319"/>
    </isoform>
</comment>
<comment type="tissue specificity">
    <text evidence="3 5 6 12">Expressed in placental trophoblasts, syncytiotrophoblast and cytotrophoblast (PubMed:10660625, PubMed:12409283, PubMed:26277985). Also located in the proximal tubules in kidneys (PubMed:10660625, PubMed:15037815, PubMed:26277985).</text>
</comment>
<comment type="PTM">
    <text evidence="9">N-glycosylated. Contains several complex-type N-glycans.</text>
</comment>
<comment type="similarity">
    <text evidence="19">Belongs to the major facilitator (TC 2.A.1) superfamily. Organic cation transporter (TC 2.A.1.19) family.</text>
</comment>
<comment type="caution">
    <text evidence="3 6 10 11 12 13">Was originally thought to be involved in both the uptake and efflux of glutarate, thereby acting as a bidirectional organic anion:dicarboxylate exchanger (PubMed:15037815). However, another study did not show any significant uptake of glutarate by SLC22A11/OAT4 (PubMed:17229912). Although initial results showed that SLC22A11/OAT4 drove DHEA-S and E1S uptake in a Na(+)-independent manner (PubMed:10660625), further studies demonstrated that both the uptake of DHEA-S and E1S by SLC22A11/OAT4 was partly Na(+)-dependent (about 50%) (PubMed:10660625, PubMed:18501590). The mechanism of SLC22A11/OAT4-mediated transport of E1S is unclear. Most studies have demonstrated a translocation of E1S through the plasma membrane into the cytosol, which would highlight a role of SLC22A11/OAT4 in placental and renal absorption (PubMed:10660625, PubMed:15037815, PubMed:17229912, PubMed:18501590, PubMed:26277985). Instead, SLC22A11/OAT4 was later proposed to mediate both the insertion into and the extraction from the plasma membrane of E1S without being translocated into the cytosol (PubMed:28027879).</text>
</comment>
<comment type="sequence caution" evidence="19">
    <conflict type="erroneous initiation">
        <sequence resource="EMBL-CDS" id="BAC11483"/>
    </conflict>
</comment>
<name>S22AB_HUMAN</name>
<evidence type="ECO:0000255" key="1"/>
<evidence type="ECO:0000256" key="2">
    <source>
        <dbReference type="SAM" id="MobiDB-lite"/>
    </source>
</evidence>
<evidence type="ECO:0000269" key="3">
    <source>
    </source>
</evidence>
<evidence type="ECO:0000269" key="4">
    <source>
    </source>
</evidence>
<evidence type="ECO:0000269" key="5">
    <source>
    </source>
</evidence>
<evidence type="ECO:0000269" key="6">
    <source>
    </source>
</evidence>
<evidence type="ECO:0000269" key="7">
    <source>
    </source>
</evidence>
<evidence type="ECO:0000269" key="8">
    <source>
    </source>
</evidence>
<evidence type="ECO:0000269" key="9">
    <source>
    </source>
</evidence>
<evidence type="ECO:0000269" key="10">
    <source>
    </source>
</evidence>
<evidence type="ECO:0000269" key="11">
    <source>
    </source>
</evidence>
<evidence type="ECO:0000269" key="12">
    <source>
    </source>
</evidence>
<evidence type="ECO:0000269" key="13">
    <source>
    </source>
</evidence>
<evidence type="ECO:0000303" key="14">
    <source>
    </source>
</evidence>
<evidence type="ECO:0000303" key="15">
    <source>
    </source>
</evidence>
<evidence type="ECO:0000303" key="16">
    <source>
    </source>
</evidence>
<evidence type="ECO:0000303" key="17">
    <source>
    </source>
</evidence>
<evidence type="ECO:0000303" key="18">
    <source>
    </source>
</evidence>
<evidence type="ECO:0000305" key="19"/>
<evidence type="ECO:0000305" key="20">
    <source>
    </source>
</evidence>
<evidence type="ECO:0000305" key="21">
    <source>
    </source>
</evidence>
<evidence type="ECO:0000312" key="22">
    <source>
        <dbReference type="HGNC" id="HGNC:18120"/>
    </source>
</evidence>
<evidence type="ECO:0007829" key="23">
    <source>
        <dbReference type="PDB" id="8WJH"/>
    </source>
</evidence>
<keyword id="KW-0002">3D-structure</keyword>
<keyword id="KW-0025">Alternative splicing</keyword>
<keyword id="KW-0039">Anion exchange</keyword>
<keyword id="KW-0050">Antiport</keyword>
<keyword id="KW-1003">Cell membrane</keyword>
<keyword id="KW-0325">Glycoprotein</keyword>
<keyword id="KW-0406">Ion transport</keyword>
<keyword id="KW-0472">Membrane</keyword>
<keyword id="KW-1267">Proteomics identification</keyword>
<keyword id="KW-1185">Reference proteome</keyword>
<keyword id="KW-0812">Transmembrane</keyword>
<keyword id="KW-1133">Transmembrane helix</keyword>
<keyword id="KW-0813">Transport</keyword>
<dbReference type="EMBL" id="AB026116">
    <property type="protein sequence ID" value="BAA95316.1"/>
    <property type="molecule type" value="mRNA"/>
</dbReference>
<dbReference type="EMBL" id="AK075224">
    <property type="protein sequence ID" value="BAC11483.1"/>
    <property type="status" value="ALT_INIT"/>
    <property type="molecule type" value="mRNA"/>
</dbReference>
<dbReference type="EMBL" id="AK129930">
    <property type="protein sequence ID" value="BAC85252.1"/>
    <property type="molecule type" value="mRNA"/>
</dbReference>
<dbReference type="EMBL" id="AK222869">
    <property type="protein sequence ID" value="BAD96589.1"/>
    <property type="molecule type" value="mRNA"/>
</dbReference>
<dbReference type="EMBL" id="AK290791">
    <property type="protein sequence ID" value="BAF83480.1"/>
    <property type="molecule type" value="mRNA"/>
</dbReference>
<dbReference type="EMBL" id="AC044790">
    <property type="protein sequence ID" value="AAK68155.1"/>
    <property type="molecule type" value="Genomic_DNA"/>
</dbReference>
<dbReference type="EMBL" id="CH471076">
    <property type="protein sequence ID" value="EAW74269.1"/>
    <property type="molecule type" value="Genomic_DNA"/>
</dbReference>
<dbReference type="EMBL" id="BC034384">
    <property type="protein sequence ID" value="AAH34384.1"/>
    <property type="molecule type" value="mRNA"/>
</dbReference>
<dbReference type="CCDS" id="CCDS76425.1">
    <molecule id="Q9NSA0-2"/>
</dbReference>
<dbReference type="CCDS" id="CCDS8074.1">
    <molecule id="Q9NSA0-1"/>
</dbReference>
<dbReference type="RefSeq" id="NP_001294914.1">
    <molecule id="Q9NSA0-2"/>
    <property type="nucleotide sequence ID" value="NM_001307985.2"/>
</dbReference>
<dbReference type="RefSeq" id="NP_060954.1">
    <molecule id="Q9NSA0-1"/>
    <property type="nucleotide sequence ID" value="NM_018484.4"/>
</dbReference>
<dbReference type="PDB" id="8WJH">
    <property type="method" value="EM"/>
    <property type="resolution" value="3.10 A"/>
    <property type="chains" value="A=1-517"/>
</dbReference>
<dbReference type="PDBsum" id="8WJH"/>
<dbReference type="EMDB" id="EMD-37580"/>
<dbReference type="SMR" id="Q9NSA0"/>
<dbReference type="BioGRID" id="120967">
    <property type="interactions" value="4"/>
</dbReference>
<dbReference type="CORUM" id="Q9NSA0"/>
<dbReference type="FunCoup" id="Q9NSA0">
    <property type="interactions" value="76"/>
</dbReference>
<dbReference type="IntAct" id="Q9NSA0">
    <property type="interactions" value="1"/>
</dbReference>
<dbReference type="STRING" id="9606.ENSP00000301891"/>
<dbReference type="BindingDB" id="Q9NSA0"/>
<dbReference type="ChEMBL" id="CHEMBL2073677"/>
<dbReference type="DrugBank" id="DB00345">
    <property type="generic name" value="Aminohippuric acid"/>
</dbReference>
<dbReference type="DrugBank" id="DB00168">
    <property type="generic name" value="Aspartame"/>
</dbReference>
<dbReference type="DrugBank" id="DB01053">
    <property type="generic name" value="Benzylpenicillin"/>
</dbReference>
<dbReference type="DrugBank" id="DB00887">
    <property type="generic name" value="Bumetanide"/>
</dbReference>
<dbReference type="DrugBank" id="DB04519">
    <property type="generic name" value="Caprylic acid"/>
</dbReference>
<dbReference type="DrugBank" id="DB00456">
    <property type="generic name" value="Cefalotin"/>
</dbReference>
<dbReference type="DrugBank" id="DB01326">
    <property type="generic name" value="Cefamandole"/>
</dbReference>
<dbReference type="DrugBank" id="DB01327">
    <property type="generic name" value="Cefazolin"/>
</dbReference>
<dbReference type="DrugBank" id="DB01329">
    <property type="generic name" value="Cefoperazone"/>
</dbReference>
<dbReference type="DrugBank" id="DB00493">
    <property type="generic name" value="Cefotaxime"/>
</dbReference>
<dbReference type="DrugBank" id="DB01212">
    <property type="generic name" value="Ceftriaxone"/>
</dbReference>
<dbReference type="DrugBank" id="DB00501">
    <property type="generic name" value="Cimetidine"/>
</dbReference>
<dbReference type="DrugBank" id="DB00286">
    <property type="generic name" value="Conjugated estrogens"/>
</dbReference>
<dbReference type="DrugBank" id="DB04133">
    <property type="generic name" value="Degraded Cephaloridine"/>
</dbReference>
<dbReference type="DrugBank" id="DB09213">
    <property type="generic name" value="Dexibuprofen"/>
</dbReference>
<dbReference type="DrugBank" id="DB00586">
    <property type="generic name" value="Diclofenac"/>
</dbReference>
<dbReference type="DrugBank" id="DB01160">
    <property type="generic name" value="Dinoprost tromethamine"/>
</dbReference>
<dbReference type="DrugBank" id="DB00917">
    <property type="generic name" value="Dinoprostone"/>
</dbReference>
<dbReference type="DrugBank" id="DB08846">
    <property type="generic name" value="Ellagic acid"/>
</dbReference>
<dbReference type="DrugBank" id="DB00783">
    <property type="generic name" value="Estradiol"/>
</dbReference>
<dbReference type="DrugBank" id="DB13952">
    <property type="generic name" value="Estradiol acetate"/>
</dbReference>
<dbReference type="DrugBank" id="DB13953">
    <property type="generic name" value="Estradiol benzoate"/>
</dbReference>
<dbReference type="DrugBank" id="DB13954">
    <property type="generic name" value="Estradiol cypionate"/>
</dbReference>
<dbReference type="DrugBank" id="DB13955">
    <property type="generic name" value="Estradiol dienanthate"/>
</dbReference>
<dbReference type="DrugBank" id="DB13956">
    <property type="generic name" value="Estradiol valerate"/>
</dbReference>
<dbReference type="DrugBank" id="DB00695">
    <property type="generic name" value="Furosemide"/>
</dbReference>
<dbReference type="DrugBank" id="DB03553">
    <property type="generic name" value="Glutaric Acid"/>
</dbReference>
<dbReference type="DrugBank" id="DB00999">
    <property type="generic name" value="Hydrochlorothiazide"/>
</dbReference>
<dbReference type="DrugBank" id="DB01050">
    <property type="generic name" value="Ibuprofen"/>
</dbReference>
<dbReference type="DrugBank" id="DB00328">
    <property type="generic name" value="Indomethacin"/>
</dbReference>
<dbReference type="DrugBank" id="DB01009">
    <property type="generic name" value="Ketoprofen"/>
</dbReference>
<dbReference type="DrugBank" id="DB11560">
    <property type="generic name" value="Lesinurad"/>
</dbReference>
<dbReference type="DrugBank" id="DB06282">
    <property type="generic name" value="Levocetirizine"/>
</dbReference>
<dbReference type="DrugBank" id="DB00563">
    <property type="generic name" value="Methotrexate"/>
</dbReference>
<dbReference type="DrugBank" id="DB01051">
    <property type="generic name" value="Novobiocin"/>
</dbReference>
<dbReference type="DrugBank" id="DB00595">
    <property type="generic name" value="Oxytetracycline"/>
</dbReference>
<dbReference type="DrugBank" id="DB00642">
    <property type="generic name" value="Pemetrexed"/>
</dbReference>
<dbReference type="DrugBank" id="DB00812">
    <property type="generic name" value="Phenylbutazone"/>
</dbReference>
<dbReference type="DrugBank" id="DB00554">
    <property type="generic name" value="Piroxicam"/>
</dbReference>
<dbReference type="DrugBank" id="DB00175">
    <property type="generic name" value="Pravastatin"/>
</dbReference>
<dbReference type="DrugBank" id="DB01032">
    <property type="generic name" value="Probenecid"/>
</dbReference>
<dbReference type="DrugBank" id="DB12377">
    <property type="generic name" value="Relebactam"/>
</dbReference>
<dbReference type="DrugBank" id="DB00936">
    <property type="generic name" value="Salicylic acid"/>
</dbReference>
<dbReference type="DrugBank" id="DB00759">
    <property type="generic name" value="Tetracycline"/>
</dbReference>
<dbReference type="DrugBank" id="DB00495">
    <property type="generic name" value="Zidovudine"/>
</dbReference>
<dbReference type="DrugCentral" id="Q9NSA0"/>
<dbReference type="GuidetoPHARMACOLOGY" id="1030"/>
<dbReference type="TCDB" id="2.A.1.19.10">
    <property type="family name" value="the major facilitator superfamily (mfs)"/>
</dbReference>
<dbReference type="GlyCosmos" id="Q9NSA0">
    <property type="glycosylation" value="3 sites, No reported glycans"/>
</dbReference>
<dbReference type="GlyGen" id="Q9NSA0">
    <property type="glycosylation" value="3 sites"/>
</dbReference>
<dbReference type="iPTMnet" id="Q9NSA0"/>
<dbReference type="PhosphoSitePlus" id="Q9NSA0"/>
<dbReference type="BioMuta" id="SLC22A11"/>
<dbReference type="DMDM" id="74734337"/>
<dbReference type="jPOST" id="Q9NSA0"/>
<dbReference type="MassIVE" id="Q9NSA0"/>
<dbReference type="PaxDb" id="9606-ENSP00000301891"/>
<dbReference type="PeptideAtlas" id="Q9NSA0"/>
<dbReference type="ProteomicsDB" id="82518">
    <molecule id="Q9NSA0-1"/>
</dbReference>
<dbReference type="ProteomicsDB" id="82519">
    <molecule id="Q9NSA0-2"/>
</dbReference>
<dbReference type="Antibodypedia" id="15467">
    <property type="antibodies" value="86 antibodies from 20 providers"/>
</dbReference>
<dbReference type="DNASU" id="55867"/>
<dbReference type="Ensembl" id="ENST00000301891.9">
    <molecule id="Q9NSA0-1"/>
    <property type="protein sequence ID" value="ENSP00000301891.4"/>
    <property type="gene ID" value="ENSG00000168065.16"/>
</dbReference>
<dbReference type="Ensembl" id="ENST00000377585.7">
    <molecule id="Q9NSA0-2"/>
    <property type="protein sequence ID" value="ENSP00000366809.3"/>
    <property type="gene ID" value="ENSG00000168065.16"/>
</dbReference>
<dbReference type="GeneID" id="55867"/>
<dbReference type="KEGG" id="hsa:55867"/>
<dbReference type="MANE-Select" id="ENST00000301891.9">
    <property type="protein sequence ID" value="ENSP00000301891.4"/>
    <property type="RefSeq nucleotide sequence ID" value="NM_018484.4"/>
    <property type="RefSeq protein sequence ID" value="NP_060954.1"/>
</dbReference>
<dbReference type="UCSC" id="uc001oai.4">
    <molecule id="Q9NSA0-1"/>
    <property type="organism name" value="human"/>
</dbReference>
<dbReference type="AGR" id="HGNC:18120"/>
<dbReference type="CTD" id="55867"/>
<dbReference type="DisGeNET" id="55867"/>
<dbReference type="GeneCards" id="SLC22A11"/>
<dbReference type="HGNC" id="HGNC:18120">
    <property type="gene designation" value="SLC22A11"/>
</dbReference>
<dbReference type="HPA" id="ENSG00000168065">
    <property type="expression patterns" value="Group enriched (epididymis, kidney, placenta)"/>
</dbReference>
<dbReference type="MIM" id="607097">
    <property type="type" value="gene"/>
</dbReference>
<dbReference type="neXtProt" id="NX_Q9NSA0"/>
<dbReference type="OpenTargets" id="ENSG00000168065"/>
<dbReference type="PharmGKB" id="PA38295"/>
<dbReference type="VEuPathDB" id="HostDB:ENSG00000168065"/>
<dbReference type="eggNOG" id="KOG0255">
    <property type="taxonomic scope" value="Eukaryota"/>
</dbReference>
<dbReference type="GeneTree" id="ENSGT00940000163267"/>
<dbReference type="InParanoid" id="Q9NSA0"/>
<dbReference type="OMA" id="NGHKEAQ"/>
<dbReference type="OrthoDB" id="2544694at2759"/>
<dbReference type="PAN-GO" id="Q9NSA0">
    <property type="GO annotations" value="1 GO annotation based on evolutionary models"/>
</dbReference>
<dbReference type="PhylomeDB" id="Q9NSA0"/>
<dbReference type="TreeFam" id="TF315847"/>
<dbReference type="PathwayCommons" id="Q9NSA0"/>
<dbReference type="Reactome" id="R-HSA-561048">
    <property type="pathway name" value="Organic anion transport"/>
</dbReference>
<dbReference type="SABIO-RK" id="Q9NSA0"/>
<dbReference type="SignaLink" id="Q9NSA0"/>
<dbReference type="BioGRID-ORCS" id="55867">
    <property type="hits" value="18 hits in 1161 CRISPR screens"/>
</dbReference>
<dbReference type="ChiTaRS" id="SLC22A11">
    <property type="organism name" value="human"/>
</dbReference>
<dbReference type="GeneWiki" id="SLC22A11"/>
<dbReference type="GenomeRNAi" id="55867"/>
<dbReference type="Pharos" id="Q9NSA0">
    <property type="development level" value="Tclin"/>
</dbReference>
<dbReference type="PRO" id="PR:Q9NSA0"/>
<dbReference type="Proteomes" id="UP000005640">
    <property type="component" value="Chromosome 11"/>
</dbReference>
<dbReference type="RNAct" id="Q9NSA0">
    <property type="molecule type" value="protein"/>
</dbReference>
<dbReference type="Bgee" id="ENSG00000168065">
    <property type="expression patterns" value="Expressed in adult mammalian kidney and 78 other cell types or tissues"/>
</dbReference>
<dbReference type="ExpressionAtlas" id="Q9NSA0">
    <property type="expression patterns" value="baseline and differential"/>
</dbReference>
<dbReference type="GO" id="GO:0016324">
    <property type="term" value="C:apical plasma membrane"/>
    <property type="evidence" value="ECO:0000314"/>
    <property type="project" value="UniProtKB"/>
</dbReference>
<dbReference type="GO" id="GO:0009925">
    <property type="term" value="C:basal plasma membrane"/>
    <property type="evidence" value="ECO:0007669"/>
    <property type="project" value="UniProtKB-SubCell"/>
</dbReference>
<dbReference type="GO" id="GO:0009897">
    <property type="term" value="C:external side of plasma membrane"/>
    <property type="evidence" value="ECO:0000314"/>
    <property type="project" value="UniProtKB"/>
</dbReference>
<dbReference type="GO" id="GO:0070062">
    <property type="term" value="C:extracellular exosome"/>
    <property type="evidence" value="ECO:0007005"/>
    <property type="project" value="UniProtKB"/>
</dbReference>
<dbReference type="GO" id="GO:0005886">
    <property type="term" value="C:plasma membrane"/>
    <property type="evidence" value="ECO:0000314"/>
    <property type="project" value="UniProtKB"/>
</dbReference>
<dbReference type="GO" id="GO:0008514">
    <property type="term" value="F:organic anion transmembrane transporter activity"/>
    <property type="evidence" value="ECO:0000314"/>
    <property type="project" value="UniProtKB"/>
</dbReference>
<dbReference type="GO" id="GO:0015132">
    <property type="term" value="F:prostaglandin transmembrane transporter activity"/>
    <property type="evidence" value="ECO:0000314"/>
    <property type="project" value="UniProtKB"/>
</dbReference>
<dbReference type="GO" id="GO:0015347">
    <property type="term" value="F:sodium-independent organic anion transmembrane transporter activity"/>
    <property type="evidence" value="ECO:0000314"/>
    <property type="project" value="UniProtKB"/>
</dbReference>
<dbReference type="GO" id="GO:0005452">
    <property type="term" value="F:solute:inorganic anion antiporter activity"/>
    <property type="evidence" value="ECO:0000314"/>
    <property type="project" value="UniProtKB"/>
</dbReference>
<dbReference type="GO" id="GO:0006811">
    <property type="term" value="P:monoatomic ion transport"/>
    <property type="evidence" value="ECO:0007669"/>
    <property type="project" value="UniProtKB-KW"/>
</dbReference>
<dbReference type="GO" id="GO:0015711">
    <property type="term" value="P:organic anion transport"/>
    <property type="evidence" value="ECO:0000314"/>
    <property type="project" value="UniProtKB"/>
</dbReference>
<dbReference type="GO" id="GO:0015732">
    <property type="term" value="P:prostaglandin transport"/>
    <property type="evidence" value="ECO:0000314"/>
    <property type="project" value="UniProtKB"/>
</dbReference>
<dbReference type="GO" id="GO:0046415">
    <property type="term" value="P:urate metabolic process"/>
    <property type="evidence" value="ECO:0000315"/>
    <property type="project" value="BHF-UCL"/>
</dbReference>
<dbReference type="CDD" id="cd17374">
    <property type="entry name" value="MFS_OAT"/>
    <property type="match status" value="1"/>
</dbReference>
<dbReference type="FunFam" id="1.20.1250.20:FF:000023">
    <property type="entry name" value="Solute carrier family 22 member 6"/>
    <property type="match status" value="1"/>
</dbReference>
<dbReference type="Gene3D" id="1.20.1250.20">
    <property type="entry name" value="MFS general substrate transporter like domains"/>
    <property type="match status" value="1"/>
</dbReference>
<dbReference type="InterPro" id="IPR020846">
    <property type="entry name" value="MFS_dom"/>
</dbReference>
<dbReference type="InterPro" id="IPR005828">
    <property type="entry name" value="MFS_sugar_transport-like"/>
</dbReference>
<dbReference type="InterPro" id="IPR036259">
    <property type="entry name" value="MFS_trans_sf"/>
</dbReference>
<dbReference type="PANTHER" id="PTHR24064">
    <property type="entry name" value="SOLUTE CARRIER FAMILY 22 MEMBER"/>
    <property type="match status" value="1"/>
</dbReference>
<dbReference type="Pfam" id="PF00083">
    <property type="entry name" value="Sugar_tr"/>
    <property type="match status" value="1"/>
</dbReference>
<dbReference type="SUPFAM" id="SSF103473">
    <property type="entry name" value="MFS general substrate transporter"/>
    <property type="match status" value="1"/>
</dbReference>
<dbReference type="PROSITE" id="PS50850">
    <property type="entry name" value="MFS"/>
    <property type="match status" value="1"/>
</dbReference>